<proteinExistence type="inferred from homology"/>
<keyword id="KW-0001">2Fe-2S</keyword>
<keyword id="KW-0028">Amino-acid biosynthesis</keyword>
<keyword id="KW-0100">Branched-chain amino acid biosynthesis</keyword>
<keyword id="KW-0408">Iron</keyword>
<keyword id="KW-0411">Iron-sulfur</keyword>
<keyword id="KW-0456">Lyase</keyword>
<keyword id="KW-0460">Magnesium</keyword>
<keyword id="KW-0479">Metal-binding</keyword>
<gene>
    <name evidence="1" type="primary">ilvD</name>
    <name type="ordered locus">BMEA_A0105</name>
</gene>
<name>ILVD_BRUMB</name>
<reference key="1">
    <citation type="submission" date="2009-03" db="EMBL/GenBank/DDBJ databases">
        <title>Brucella melitensis ATCC 23457 whole genome shotgun sequencing project.</title>
        <authorList>
            <person name="Setubal J.C."/>
            <person name="Boyle S."/>
            <person name="Crasta O.R."/>
            <person name="Gillespie J.J."/>
            <person name="Kenyon R.W."/>
            <person name="Lu J."/>
            <person name="Mane S."/>
            <person name="Nagrani S."/>
            <person name="Shallom J.M."/>
            <person name="Shallom S."/>
            <person name="Shukla M."/>
            <person name="Snyder E.E."/>
            <person name="Sobral B.W."/>
            <person name="Wattam A.R."/>
            <person name="Will R."/>
            <person name="Williams K."/>
            <person name="Yoo H."/>
            <person name="Munk C."/>
            <person name="Tapia R."/>
            <person name="Han C."/>
            <person name="Detter J.C."/>
            <person name="Bruce D."/>
            <person name="Brettin T.S."/>
        </authorList>
    </citation>
    <scope>NUCLEOTIDE SEQUENCE [LARGE SCALE GENOMIC DNA]</scope>
    <source>
        <strain>ATCC 23457</strain>
    </source>
</reference>
<comment type="function">
    <text evidence="1">Functions in the biosynthesis of branched-chain amino acids. Catalyzes the dehydration of (2R,3R)-2,3-dihydroxy-3-methylpentanoate (2,3-dihydroxy-3-methylvalerate) into 2-oxo-3-methylpentanoate (2-oxo-3-methylvalerate) and of (2R)-2,3-dihydroxy-3-methylbutanoate (2,3-dihydroxyisovalerate) into 2-oxo-3-methylbutanoate (2-oxoisovalerate), the penultimate precursor to L-isoleucine and L-valine, respectively.</text>
</comment>
<comment type="catalytic activity">
    <reaction evidence="1">
        <text>(2R)-2,3-dihydroxy-3-methylbutanoate = 3-methyl-2-oxobutanoate + H2O</text>
        <dbReference type="Rhea" id="RHEA:24809"/>
        <dbReference type="ChEBI" id="CHEBI:11851"/>
        <dbReference type="ChEBI" id="CHEBI:15377"/>
        <dbReference type="ChEBI" id="CHEBI:49072"/>
        <dbReference type="EC" id="4.2.1.9"/>
    </reaction>
    <physiologicalReaction direction="left-to-right" evidence="1">
        <dbReference type="Rhea" id="RHEA:24810"/>
    </physiologicalReaction>
</comment>
<comment type="catalytic activity">
    <reaction evidence="1">
        <text>(2R,3R)-2,3-dihydroxy-3-methylpentanoate = (S)-3-methyl-2-oxopentanoate + H2O</text>
        <dbReference type="Rhea" id="RHEA:27694"/>
        <dbReference type="ChEBI" id="CHEBI:15377"/>
        <dbReference type="ChEBI" id="CHEBI:35146"/>
        <dbReference type="ChEBI" id="CHEBI:49258"/>
        <dbReference type="EC" id="4.2.1.9"/>
    </reaction>
    <physiologicalReaction direction="left-to-right" evidence="1">
        <dbReference type="Rhea" id="RHEA:27695"/>
    </physiologicalReaction>
</comment>
<comment type="cofactor">
    <cofactor evidence="1">
        <name>[2Fe-2S] cluster</name>
        <dbReference type="ChEBI" id="CHEBI:190135"/>
    </cofactor>
    <text evidence="1">Binds 1 [2Fe-2S] cluster per subunit. This cluster acts as a Lewis acid cofactor.</text>
</comment>
<comment type="cofactor">
    <cofactor evidence="1">
        <name>Mg(2+)</name>
        <dbReference type="ChEBI" id="CHEBI:18420"/>
    </cofactor>
</comment>
<comment type="pathway">
    <text evidence="1">Amino-acid biosynthesis; L-isoleucine biosynthesis; L-isoleucine from 2-oxobutanoate: step 3/4.</text>
</comment>
<comment type="pathway">
    <text evidence="1">Amino-acid biosynthesis; L-valine biosynthesis; L-valine from pyruvate: step 3/4.</text>
</comment>
<comment type="subunit">
    <text evidence="1">Homodimer.</text>
</comment>
<comment type="similarity">
    <text evidence="1">Belongs to the IlvD/Edd family.</text>
</comment>
<accession>C0RGF9</accession>
<dbReference type="EC" id="4.2.1.9" evidence="1"/>
<dbReference type="EMBL" id="CP001488">
    <property type="protein sequence ID" value="ACN99916.1"/>
    <property type="molecule type" value="Genomic_DNA"/>
</dbReference>
<dbReference type="RefSeq" id="WP_002965347.1">
    <property type="nucleotide sequence ID" value="NC_012441.1"/>
</dbReference>
<dbReference type="SMR" id="C0RGF9"/>
<dbReference type="GeneID" id="93017425"/>
<dbReference type="KEGG" id="bmi:BMEA_A0105"/>
<dbReference type="HOGENOM" id="CLU_014271_4_2_5"/>
<dbReference type="UniPathway" id="UPA00047">
    <property type="reaction ID" value="UER00057"/>
</dbReference>
<dbReference type="UniPathway" id="UPA00049">
    <property type="reaction ID" value="UER00061"/>
</dbReference>
<dbReference type="PRO" id="PR:C0RGF9"/>
<dbReference type="Proteomes" id="UP000001748">
    <property type="component" value="Chromosome I"/>
</dbReference>
<dbReference type="GO" id="GO:0005829">
    <property type="term" value="C:cytosol"/>
    <property type="evidence" value="ECO:0007669"/>
    <property type="project" value="TreeGrafter"/>
</dbReference>
<dbReference type="GO" id="GO:0051537">
    <property type="term" value="F:2 iron, 2 sulfur cluster binding"/>
    <property type="evidence" value="ECO:0007669"/>
    <property type="project" value="UniProtKB-UniRule"/>
</dbReference>
<dbReference type="GO" id="GO:0004160">
    <property type="term" value="F:dihydroxy-acid dehydratase activity"/>
    <property type="evidence" value="ECO:0007669"/>
    <property type="project" value="UniProtKB-UniRule"/>
</dbReference>
<dbReference type="GO" id="GO:0000287">
    <property type="term" value="F:magnesium ion binding"/>
    <property type="evidence" value="ECO:0007669"/>
    <property type="project" value="UniProtKB-UniRule"/>
</dbReference>
<dbReference type="GO" id="GO:0009097">
    <property type="term" value="P:isoleucine biosynthetic process"/>
    <property type="evidence" value="ECO:0007669"/>
    <property type="project" value="UniProtKB-UniRule"/>
</dbReference>
<dbReference type="GO" id="GO:0009099">
    <property type="term" value="P:L-valine biosynthetic process"/>
    <property type="evidence" value="ECO:0007669"/>
    <property type="project" value="UniProtKB-UniRule"/>
</dbReference>
<dbReference type="FunFam" id="3.50.30.80:FF:000001">
    <property type="entry name" value="Dihydroxy-acid dehydratase"/>
    <property type="match status" value="1"/>
</dbReference>
<dbReference type="Gene3D" id="3.50.30.80">
    <property type="entry name" value="IlvD/EDD C-terminal domain-like"/>
    <property type="match status" value="1"/>
</dbReference>
<dbReference type="HAMAP" id="MF_00012">
    <property type="entry name" value="IlvD"/>
    <property type="match status" value="1"/>
</dbReference>
<dbReference type="InterPro" id="IPR042096">
    <property type="entry name" value="Dihydro-acid_dehy_C"/>
</dbReference>
<dbReference type="InterPro" id="IPR004404">
    <property type="entry name" value="DihydroxyA_deHydtase"/>
</dbReference>
<dbReference type="InterPro" id="IPR020558">
    <property type="entry name" value="DiOHA_6PGluconate_deHydtase_CS"/>
</dbReference>
<dbReference type="InterPro" id="IPR056740">
    <property type="entry name" value="ILV_EDD_C"/>
</dbReference>
<dbReference type="InterPro" id="IPR000581">
    <property type="entry name" value="ILV_EDD_N"/>
</dbReference>
<dbReference type="InterPro" id="IPR037237">
    <property type="entry name" value="IlvD/EDD_N"/>
</dbReference>
<dbReference type="NCBIfam" id="TIGR00110">
    <property type="entry name" value="ilvD"/>
    <property type="match status" value="1"/>
</dbReference>
<dbReference type="NCBIfam" id="NF009103">
    <property type="entry name" value="PRK12448.1"/>
    <property type="match status" value="1"/>
</dbReference>
<dbReference type="PANTHER" id="PTHR43661">
    <property type="entry name" value="D-XYLONATE DEHYDRATASE"/>
    <property type="match status" value="1"/>
</dbReference>
<dbReference type="PANTHER" id="PTHR43661:SF3">
    <property type="entry name" value="D-XYLONATE DEHYDRATASE YAGF-RELATED"/>
    <property type="match status" value="1"/>
</dbReference>
<dbReference type="Pfam" id="PF24877">
    <property type="entry name" value="ILV_EDD_C"/>
    <property type="match status" value="1"/>
</dbReference>
<dbReference type="Pfam" id="PF00920">
    <property type="entry name" value="ILVD_EDD_N"/>
    <property type="match status" value="1"/>
</dbReference>
<dbReference type="SUPFAM" id="SSF143975">
    <property type="entry name" value="IlvD/EDD N-terminal domain-like"/>
    <property type="match status" value="1"/>
</dbReference>
<dbReference type="SUPFAM" id="SSF52016">
    <property type="entry name" value="LeuD/IlvD-like"/>
    <property type="match status" value="1"/>
</dbReference>
<dbReference type="PROSITE" id="PS00886">
    <property type="entry name" value="ILVD_EDD_1"/>
    <property type="match status" value="1"/>
</dbReference>
<dbReference type="PROSITE" id="PS00887">
    <property type="entry name" value="ILVD_EDD_2"/>
    <property type="match status" value="1"/>
</dbReference>
<feature type="chain" id="PRO_1000190652" description="Dihydroxy-acid dehydratase">
    <location>
        <begin position="1"/>
        <end position="611"/>
    </location>
</feature>
<feature type="active site" description="Proton acceptor" evidence="1">
    <location>
        <position position="517"/>
    </location>
</feature>
<feature type="binding site" evidence="1">
    <location>
        <position position="81"/>
    </location>
    <ligand>
        <name>Mg(2+)</name>
        <dbReference type="ChEBI" id="CHEBI:18420"/>
    </ligand>
</feature>
<feature type="binding site" evidence="1">
    <location>
        <position position="122"/>
    </location>
    <ligand>
        <name>[2Fe-2S] cluster</name>
        <dbReference type="ChEBI" id="CHEBI:190135"/>
    </ligand>
</feature>
<feature type="binding site" evidence="1">
    <location>
        <position position="123"/>
    </location>
    <ligand>
        <name>Mg(2+)</name>
        <dbReference type="ChEBI" id="CHEBI:18420"/>
    </ligand>
</feature>
<feature type="binding site" description="via carbamate group" evidence="1">
    <location>
        <position position="124"/>
    </location>
    <ligand>
        <name>Mg(2+)</name>
        <dbReference type="ChEBI" id="CHEBI:18420"/>
    </ligand>
</feature>
<feature type="binding site" evidence="1">
    <location>
        <position position="195"/>
    </location>
    <ligand>
        <name>[2Fe-2S] cluster</name>
        <dbReference type="ChEBI" id="CHEBI:190135"/>
    </ligand>
</feature>
<feature type="binding site" evidence="1">
    <location>
        <position position="491"/>
    </location>
    <ligand>
        <name>Mg(2+)</name>
        <dbReference type="ChEBI" id="CHEBI:18420"/>
    </ligand>
</feature>
<feature type="modified residue" description="N6-carboxylysine" evidence="1">
    <location>
        <position position="124"/>
    </location>
</feature>
<evidence type="ECO:0000255" key="1">
    <source>
        <dbReference type="HAMAP-Rule" id="MF_00012"/>
    </source>
</evidence>
<organism>
    <name type="scientific">Brucella melitensis biotype 2 (strain ATCC 23457)</name>
    <dbReference type="NCBI Taxonomy" id="546272"/>
    <lineage>
        <taxon>Bacteria</taxon>
        <taxon>Pseudomonadati</taxon>
        <taxon>Pseudomonadota</taxon>
        <taxon>Alphaproteobacteria</taxon>
        <taxon>Hyphomicrobiales</taxon>
        <taxon>Brucellaceae</taxon>
        <taxon>Brucella/Ochrobactrum group</taxon>
        <taxon>Brucella</taxon>
    </lineage>
</organism>
<sequence>MPPYRSRTTTHGRNMAGARGLWRATGMKDEDFGKPIIAVVNSFTQFVPGHVHLKDLGQLVAREIESAGGVAKEFNTIAVDDGIAMGHDGMLYSLPSRELIADSVEYMVNAHCADAMVCISNCDKITPGMLMAALRLNIPVVFVSGGPMEAGKVVWEDSVKKLDLVDAMVAAADDHYTDEQVKAIERSACPTCGSCSGMFTANSMNCLTEALGLSLPGNGSTLATHADRKRLFVEAGHLIVDLARRYYEQDDESVLPRSIATFSAFENAMTLDIAMGGSTNTVLHLLAAAQEAEIDFTMADIDRLSRRVPVLCKVAPAVSSVHMEDVHHAGGIMGILGQLDNAGLLTTSIPTVHSETLAKALDHWDVTRTNSEMVHKFYSAAPGGVPTQVAFSQERRFDKVDTDREKGVIRSKEHAFSQDGGLAVLYGNLAEDGCIVKTAGVDDSILKFSGPARIFESQDSAVLGILNGKIKPGDIVLIRYEGPRGGPGMQEMLYPTSYLKSKGLGKACALITDGRFSGGSSGLSIGHVSPEAAEGGTIGLVREGDIIDIDIPNRKIHLAVDDATLAERRAEQDAAGWKPAEERKRKISTALKAYAAMATSAARGAVRKLPD</sequence>
<protein>
    <recommendedName>
        <fullName evidence="1">Dihydroxy-acid dehydratase</fullName>
        <shortName evidence="1">DAD</shortName>
        <ecNumber evidence="1">4.2.1.9</ecNumber>
    </recommendedName>
</protein>